<feature type="chain" id="PRO_0000405261" description="Protein FANTASTIC FOUR 2">
    <location>
        <begin position="1"/>
        <end position="240"/>
    </location>
</feature>
<feature type="domain" description="FAF">
    <location>
        <begin position="117"/>
        <end position="171"/>
    </location>
</feature>
<feature type="region of interest" description="Disordered" evidence="1">
    <location>
        <begin position="89"/>
        <end position="124"/>
    </location>
</feature>
<feature type="region of interest" description="Disordered" evidence="1">
    <location>
        <begin position="177"/>
        <end position="229"/>
    </location>
</feature>
<feature type="compositionally biased region" description="Acidic residues" evidence="1">
    <location>
        <begin position="184"/>
        <end position="200"/>
    </location>
</feature>
<feature type="compositionally biased region" description="Basic residues" evidence="1">
    <location>
        <begin position="207"/>
        <end position="216"/>
    </location>
</feature>
<feature type="compositionally biased region" description="Basic and acidic residues" evidence="1">
    <location>
        <begin position="217"/>
        <end position="226"/>
    </location>
</feature>
<dbReference type="EMBL" id="AC005278">
    <property type="protein sequence ID" value="AAC72118.1"/>
    <property type="status" value="ALT_SEQ"/>
    <property type="molecule type" value="Genomic_DNA"/>
</dbReference>
<dbReference type="EMBL" id="CP002684">
    <property type="protein sequence ID" value="AEE27539.1"/>
    <property type="molecule type" value="Genomic_DNA"/>
</dbReference>
<dbReference type="EMBL" id="AK118027">
    <property type="protein sequence ID" value="BAC42659.1"/>
    <property type="molecule type" value="mRNA"/>
</dbReference>
<dbReference type="EMBL" id="AY087507">
    <property type="protein sequence ID" value="AAM65050.1"/>
    <property type="status" value="ALT_INIT"/>
    <property type="molecule type" value="mRNA"/>
</dbReference>
<dbReference type="PIR" id="A86163">
    <property type="entry name" value="A86163"/>
</dbReference>
<dbReference type="RefSeq" id="NP_563678.1">
    <property type="nucleotide sequence ID" value="NM_100199.2"/>
</dbReference>
<dbReference type="FunCoup" id="Q8GXU9">
    <property type="interactions" value="1"/>
</dbReference>
<dbReference type="STRING" id="3702.Q8GXU9"/>
<dbReference type="PaxDb" id="3702-AT1G03170.1"/>
<dbReference type="EnsemblPlants" id="AT1G03170.1">
    <property type="protein sequence ID" value="AT1G03170.1"/>
    <property type="gene ID" value="AT1G03170"/>
</dbReference>
<dbReference type="GeneID" id="839563"/>
<dbReference type="Gramene" id="AT1G03170.1">
    <property type="protein sequence ID" value="AT1G03170.1"/>
    <property type="gene ID" value="AT1G03170"/>
</dbReference>
<dbReference type="KEGG" id="ath:AT1G03170"/>
<dbReference type="Araport" id="AT1G03170"/>
<dbReference type="TAIR" id="AT1G03170">
    <property type="gene designation" value="FAF2"/>
</dbReference>
<dbReference type="HOGENOM" id="CLU_053779_0_0_1"/>
<dbReference type="InParanoid" id="Q8GXU9"/>
<dbReference type="OMA" id="SKYNRMV"/>
<dbReference type="PhylomeDB" id="Q8GXU9"/>
<dbReference type="PRO" id="PR:Q8GXU9"/>
<dbReference type="Proteomes" id="UP000006548">
    <property type="component" value="Chromosome 1"/>
</dbReference>
<dbReference type="ExpressionAtlas" id="Q8GXU9">
    <property type="expression patterns" value="baseline and differential"/>
</dbReference>
<dbReference type="GO" id="GO:0010075">
    <property type="term" value="P:regulation of meristem growth"/>
    <property type="evidence" value="ECO:0000315"/>
    <property type="project" value="UniProtKB"/>
</dbReference>
<dbReference type="InterPro" id="IPR021410">
    <property type="entry name" value="FAF"/>
</dbReference>
<dbReference type="InterPro" id="IPR046431">
    <property type="entry name" value="FAF_dom"/>
</dbReference>
<dbReference type="PANTHER" id="PTHR33155">
    <property type="entry name" value="FANTASTIC FOUR-LIKE PROTEIN (DUF3049)"/>
    <property type="match status" value="1"/>
</dbReference>
<dbReference type="PANTHER" id="PTHR33155:SF19">
    <property type="entry name" value="PROTEIN FANTASTIC FOUR 2"/>
    <property type="match status" value="1"/>
</dbReference>
<dbReference type="Pfam" id="PF11250">
    <property type="entry name" value="FAF"/>
    <property type="match status" value="1"/>
</dbReference>
<keyword id="KW-1185">Reference proteome</keyword>
<proteinExistence type="evidence at transcript level"/>
<comment type="function">
    <text evidence="2">Regulates the size of the shoot meristem by modulating the CLV3-WUS feedback loop. Can repress WUS but is under negative control by CLV3.</text>
</comment>
<comment type="tissue specificity">
    <text evidence="2">Expressed in the shoot apex, stamens, carpels and young siliques. Detected in provascular and vascular tissue, and in the center of the vegetative and inflorescence meristems. Expressed in the funiculus. In roots and leaves, predominantly expressed in phloem.</text>
</comment>
<comment type="developmental stage">
    <text evidence="2">Expressed throughout development. Increased expression in the shoot apex during the transition to flowering. Induced in the inflorescence vasculature and young flower buds as flowering commenced.</text>
</comment>
<comment type="similarity">
    <text evidence="3">Belongs to the fantastic four family.</text>
</comment>
<comment type="sequence caution" evidence="3">
    <conflict type="erroneous gene model prediction">
        <sequence resource="EMBL-CDS" id="AAC72118"/>
    </conflict>
</comment>
<comment type="sequence caution" evidence="3">
    <conflict type="erroneous initiation">
        <sequence resource="EMBL-CDS" id="AAM65050"/>
    </conflict>
    <text>Truncated N-terminus.</text>
</comment>
<sequence>MSLVVCQPQINESFYQKDDMGGLSFLQSMSDITSIAQTKEDKAYVHPMEKRSVSKLNEKSLEMCTESLGTETGSESGDELSLLAFEATTTPRAPPRQLKPQEDTNLPDKTPPMSRNNSFPPPIKFVEDSKYNRMVRWLGEDGRIVVQAIRVSSPPSCFVSERGEGRLRLILTSESSLLSHNHEEEEEEETEEGIDEETSENLEGKSGNKKFSRFSRRCKENGREPKPMLTWKQQQFWVAT</sequence>
<protein>
    <recommendedName>
        <fullName>Protein FANTASTIC FOUR 2</fullName>
    </recommendedName>
</protein>
<reference key="1">
    <citation type="journal article" date="2000" name="Nature">
        <title>Sequence and analysis of chromosome 1 of the plant Arabidopsis thaliana.</title>
        <authorList>
            <person name="Theologis A."/>
            <person name="Ecker J.R."/>
            <person name="Palm C.J."/>
            <person name="Federspiel N.A."/>
            <person name="Kaul S."/>
            <person name="White O."/>
            <person name="Alonso J."/>
            <person name="Altafi H."/>
            <person name="Araujo R."/>
            <person name="Bowman C.L."/>
            <person name="Brooks S.Y."/>
            <person name="Buehler E."/>
            <person name="Chan A."/>
            <person name="Chao Q."/>
            <person name="Chen H."/>
            <person name="Cheuk R.F."/>
            <person name="Chin C.W."/>
            <person name="Chung M.K."/>
            <person name="Conn L."/>
            <person name="Conway A.B."/>
            <person name="Conway A.R."/>
            <person name="Creasy T.H."/>
            <person name="Dewar K."/>
            <person name="Dunn P."/>
            <person name="Etgu P."/>
            <person name="Feldblyum T.V."/>
            <person name="Feng J.-D."/>
            <person name="Fong B."/>
            <person name="Fujii C.Y."/>
            <person name="Gill J.E."/>
            <person name="Goldsmith A.D."/>
            <person name="Haas B."/>
            <person name="Hansen N.F."/>
            <person name="Hughes B."/>
            <person name="Huizar L."/>
            <person name="Hunter J.L."/>
            <person name="Jenkins J."/>
            <person name="Johnson-Hopson C."/>
            <person name="Khan S."/>
            <person name="Khaykin E."/>
            <person name="Kim C.J."/>
            <person name="Koo H.L."/>
            <person name="Kremenetskaia I."/>
            <person name="Kurtz D.B."/>
            <person name="Kwan A."/>
            <person name="Lam B."/>
            <person name="Langin-Hooper S."/>
            <person name="Lee A."/>
            <person name="Lee J.M."/>
            <person name="Lenz C.A."/>
            <person name="Li J.H."/>
            <person name="Li Y.-P."/>
            <person name="Lin X."/>
            <person name="Liu S.X."/>
            <person name="Liu Z.A."/>
            <person name="Luros J.S."/>
            <person name="Maiti R."/>
            <person name="Marziali A."/>
            <person name="Militscher J."/>
            <person name="Miranda M."/>
            <person name="Nguyen M."/>
            <person name="Nierman W.C."/>
            <person name="Osborne B.I."/>
            <person name="Pai G."/>
            <person name="Peterson J."/>
            <person name="Pham P.K."/>
            <person name="Rizzo M."/>
            <person name="Rooney T."/>
            <person name="Rowley D."/>
            <person name="Sakano H."/>
            <person name="Salzberg S.L."/>
            <person name="Schwartz J.R."/>
            <person name="Shinn P."/>
            <person name="Southwick A.M."/>
            <person name="Sun H."/>
            <person name="Tallon L.J."/>
            <person name="Tambunga G."/>
            <person name="Toriumi M.J."/>
            <person name="Town C.D."/>
            <person name="Utterback T."/>
            <person name="Van Aken S."/>
            <person name="Vaysberg M."/>
            <person name="Vysotskaia V.S."/>
            <person name="Walker M."/>
            <person name="Wu D."/>
            <person name="Yu G."/>
            <person name="Fraser C.M."/>
            <person name="Venter J.C."/>
            <person name="Davis R.W."/>
        </authorList>
    </citation>
    <scope>NUCLEOTIDE SEQUENCE [LARGE SCALE GENOMIC DNA]</scope>
    <source>
        <strain>cv. Columbia</strain>
    </source>
</reference>
<reference key="2">
    <citation type="journal article" date="2017" name="Plant J.">
        <title>Araport11: a complete reannotation of the Arabidopsis thaliana reference genome.</title>
        <authorList>
            <person name="Cheng C.Y."/>
            <person name="Krishnakumar V."/>
            <person name="Chan A.P."/>
            <person name="Thibaud-Nissen F."/>
            <person name="Schobel S."/>
            <person name="Town C.D."/>
        </authorList>
    </citation>
    <scope>GENOME REANNOTATION</scope>
    <source>
        <strain>cv. Columbia</strain>
    </source>
</reference>
<reference key="3">
    <citation type="journal article" date="2002" name="Science">
        <title>Functional annotation of a full-length Arabidopsis cDNA collection.</title>
        <authorList>
            <person name="Seki M."/>
            <person name="Narusaka M."/>
            <person name="Kamiya A."/>
            <person name="Ishida J."/>
            <person name="Satou M."/>
            <person name="Sakurai T."/>
            <person name="Nakajima M."/>
            <person name="Enju A."/>
            <person name="Akiyama K."/>
            <person name="Oono Y."/>
            <person name="Muramatsu M."/>
            <person name="Hayashizaki Y."/>
            <person name="Kawai J."/>
            <person name="Carninci P."/>
            <person name="Itoh M."/>
            <person name="Ishii Y."/>
            <person name="Arakawa T."/>
            <person name="Shibata K."/>
            <person name="Shinagawa A."/>
            <person name="Shinozaki K."/>
        </authorList>
    </citation>
    <scope>NUCLEOTIDE SEQUENCE [LARGE SCALE MRNA]</scope>
    <source>
        <strain>cv. Columbia</strain>
    </source>
</reference>
<reference key="4">
    <citation type="submission" date="2002-03" db="EMBL/GenBank/DDBJ databases">
        <title>Full-length cDNA from Arabidopsis thaliana.</title>
        <authorList>
            <person name="Brover V.V."/>
            <person name="Troukhan M.E."/>
            <person name="Alexandrov N.A."/>
            <person name="Lu Y.-P."/>
            <person name="Flavell R.B."/>
            <person name="Feldmann K.A."/>
        </authorList>
    </citation>
    <scope>NUCLEOTIDE SEQUENCE [LARGE SCALE MRNA]</scope>
</reference>
<reference key="5">
    <citation type="journal article" date="2010" name="BMC Plant Biol.">
        <title>The FANTASTIC FOUR proteins influence shoot meristem size in Arabidopsis thaliana.</title>
        <authorList>
            <person name="Wahl V."/>
            <person name="Brand L.H."/>
            <person name="Guo Y.L."/>
            <person name="Schmid M."/>
        </authorList>
    </citation>
    <scope>FUNCTION</scope>
    <scope>DEVELOPMENTAL STAGE</scope>
    <scope>TISSUE SPECIFICITY</scope>
    <source>
        <strain>cv. Columbia</strain>
    </source>
</reference>
<accession>Q8GXU9</accession>
<accession>Q9ZVR9</accession>
<organism>
    <name type="scientific">Arabidopsis thaliana</name>
    <name type="common">Mouse-ear cress</name>
    <dbReference type="NCBI Taxonomy" id="3702"/>
    <lineage>
        <taxon>Eukaryota</taxon>
        <taxon>Viridiplantae</taxon>
        <taxon>Streptophyta</taxon>
        <taxon>Embryophyta</taxon>
        <taxon>Tracheophyta</taxon>
        <taxon>Spermatophyta</taxon>
        <taxon>Magnoliopsida</taxon>
        <taxon>eudicotyledons</taxon>
        <taxon>Gunneridae</taxon>
        <taxon>Pentapetalae</taxon>
        <taxon>rosids</taxon>
        <taxon>malvids</taxon>
        <taxon>Brassicales</taxon>
        <taxon>Brassicaceae</taxon>
        <taxon>Camelineae</taxon>
        <taxon>Arabidopsis</taxon>
    </lineage>
</organism>
<gene>
    <name type="primary">FAF2</name>
    <name type="ordered locus">At1g03170</name>
    <name type="ORF">F15K9.21</name>
    <name type="ORF">F15K9.22</name>
</gene>
<evidence type="ECO:0000256" key="1">
    <source>
        <dbReference type="SAM" id="MobiDB-lite"/>
    </source>
</evidence>
<evidence type="ECO:0000269" key="2">
    <source>
    </source>
</evidence>
<evidence type="ECO:0000305" key="3"/>
<name>FAF2_ARATH</name>